<feature type="chain" id="PRO_1000092652" description="Ribosomal RNA small subunit methyltransferase G">
    <location>
        <begin position="1"/>
        <end position="207"/>
    </location>
</feature>
<feature type="binding site" evidence="1">
    <location>
        <position position="73"/>
    </location>
    <ligand>
        <name>S-adenosyl-L-methionine</name>
        <dbReference type="ChEBI" id="CHEBI:59789"/>
    </ligand>
</feature>
<feature type="binding site" evidence="1">
    <location>
        <position position="78"/>
    </location>
    <ligand>
        <name>S-adenosyl-L-methionine</name>
        <dbReference type="ChEBI" id="CHEBI:59789"/>
    </ligand>
</feature>
<feature type="binding site" evidence="1">
    <location>
        <begin position="124"/>
        <end position="125"/>
    </location>
    <ligand>
        <name>S-adenosyl-L-methionine</name>
        <dbReference type="ChEBI" id="CHEBI:59789"/>
    </ligand>
</feature>
<feature type="binding site" evidence="1">
    <location>
        <position position="139"/>
    </location>
    <ligand>
        <name>S-adenosyl-L-methionine</name>
        <dbReference type="ChEBI" id="CHEBI:59789"/>
    </ligand>
</feature>
<keyword id="KW-0963">Cytoplasm</keyword>
<keyword id="KW-0489">Methyltransferase</keyword>
<keyword id="KW-0698">rRNA processing</keyword>
<keyword id="KW-0949">S-adenosyl-L-methionine</keyword>
<keyword id="KW-0808">Transferase</keyword>
<comment type="function">
    <text evidence="1">Specifically methylates the N7 position of guanine in position 527 of 16S rRNA.</text>
</comment>
<comment type="catalytic activity">
    <reaction evidence="1">
        <text>guanosine(527) in 16S rRNA + S-adenosyl-L-methionine = N(7)-methylguanosine(527) in 16S rRNA + S-adenosyl-L-homocysteine</text>
        <dbReference type="Rhea" id="RHEA:42732"/>
        <dbReference type="Rhea" id="RHEA-COMP:10209"/>
        <dbReference type="Rhea" id="RHEA-COMP:10210"/>
        <dbReference type="ChEBI" id="CHEBI:57856"/>
        <dbReference type="ChEBI" id="CHEBI:59789"/>
        <dbReference type="ChEBI" id="CHEBI:74269"/>
        <dbReference type="ChEBI" id="CHEBI:74480"/>
        <dbReference type="EC" id="2.1.1.170"/>
    </reaction>
</comment>
<comment type="subcellular location">
    <subcellularLocation>
        <location evidence="1">Cytoplasm</location>
    </subcellularLocation>
</comment>
<comment type="similarity">
    <text evidence="1">Belongs to the methyltransferase superfamily. RNA methyltransferase RsmG family.</text>
</comment>
<protein>
    <recommendedName>
        <fullName evidence="1">Ribosomal RNA small subunit methyltransferase G</fullName>
        <ecNumber evidence="1">2.1.1.170</ecNumber>
    </recommendedName>
    <alternativeName>
        <fullName evidence="1">16S rRNA 7-methylguanosine methyltransferase</fullName>
        <shortName evidence="1">16S rRNA m7G methyltransferase</shortName>
    </alternativeName>
</protein>
<name>RSMG_SALSV</name>
<accession>B4TN41</accession>
<reference key="1">
    <citation type="journal article" date="2011" name="J. Bacteriol.">
        <title>Comparative genomics of 28 Salmonella enterica isolates: evidence for CRISPR-mediated adaptive sublineage evolution.</title>
        <authorList>
            <person name="Fricke W.F."/>
            <person name="Mammel M.K."/>
            <person name="McDermott P.F."/>
            <person name="Tartera C."/>
            <person name="White D.G."/>
            <person name="Leclerc J.E."/>
            <person name="Ravel J."/>
            <person name="Cebula T.A."/>
        </authorList>
    </citation>
    <scope>NUCLEOTIDE SEQUENCE [LARGE SCALE GENOMIC DNA]</scope>
    <source>
        <strain>CVM19633</strain>
    </source>
</reference>
<dbReference type="EC" id="2.1.1.170" evidence="1"/>
<dbReference type="EMBL" id="CP001127">
    <property type="protein sequence ID" value="ACF88731.1"/>
    <property type="molecule type" value="Genomic_DNA"/>
</dbReference>
<dbReference type="RefSeq" id="WP_001531211.1">
    <property type="nucleotide sequence ID" value="NC_011094.1"/>
</dbReference>
<dbReference type="SMR" id="B4TN41"/>
<dbReference type="KEGG" id="sew:SeSA_A4085"/>
<dbReference type="HOGENOM" id="CLU_065341_2_2_6"/>
<dbReference type="Proteomes" id="UP000001865">
    <property type="component" value="Chromosome"/>
</dbReference>
<dbReference type="GO" id="GO:0005829">
    <property type="term" value="C:cytosol"/>
    <property type="evidence" value="ECO:0007669"/>
    <property type="project" value="TreeGrafter"/>
</dbReference>
<dbReference type="GO" id="GO:0070043">
    <property type="term" value="F:rRNA (guanine-N7-)-methyltransferase activity"/>
    <property type="evidence" value="ECO:0007669"/>
    <property type="project" value="UniProtKB-UniRule"/>
</dbReference>
<dbReference type="CDD" id="cd02440">
    <property type="entry name" value="AdoMet_MTases"/>
    <property type="match status" value="1"/>
</dbReference>
<dbReference type="FunFam" id="3.40.50.150:FF:000032">
    <property type="entry name" value="Ribosomal RNA small subunit methyltransferase G"/>
    <property type="match status" value="1"/>
</dbReference>
<dbReference type="Gene3D" id="3.40.50.150">
    <property type="entry name" value="Vaccinia Virus protein VP39"/>
    <property type="match status" value="1"/>
</dbReference>
<dbReference type="HAMAP" id="MF_00074">
    <property type="entry name" value="16SrRNA_methyltr_G"/>
    <property type="match status" value="1"/>
</dbReference>
<dbReference type="InterPro" id="IPR003682">
    <property type="entry name" value="rRNA_ssu_MeTfrase_G"/>
</dbReference>
<dbReference type="InterPro" id="IPR029063">
    <property type="entry name" value="SAM-dependent_MTases_sf"/>
</dbReference>
<dbReference type="NCBIfam" id="TIGR00138">
    <property type="entry name" value="rsmG_gidB"/>
    <property type="match status" value="1"/>
</dbReference>
<dbReference type="PANTHER" id="PTHR31760">
    <property type="entry name" value="S-ADENOSYL-L-METHIONINE-DEPENDENT METHYLTRANSFERASES SUPERFAMILY PROTEIN"/>
    <property type="match status" value="1"/>
</dbReference>
<dbReference type="PANTHER" id="PTHR31760:SF0">
    <property type="entry name" value="S-ADENOSYL-L-METHIONINE-DEPENDENT METHYLTRANSFERASES SUPERFAMILY PROTEIN"/>
    <property type="match status" value="1"/>
</dbReference>
<dbReference type="Pfam" id="PF02527">
    <property type="entry name" value="GidB"/>
    <property type="match status" value="1"/>
</dbReference>
<dbReference type="PIRSF" id="PIRSF003078">
    <property type="entry name" value="GidB"/>
    <property type="match status" value="1"/>
</dbReference>
<dbReference type="SUPFAM" id="SSF53335">
    <property type="entry name" value="S-adenosyl-L-methionine-dependent methyltransferases"/>
    <property type="match status" value="1"/>
</dbReference>
<organism>
    <name type="scientific">Salmonella schwarzengrund (strain CVM19633)</name>
    <dbReference type="NCBI Taxonomy" id="439843"/>
    <lineage>
        <taxon>Bacteria</taxon>
        <taxon>Pseudomonadati</taxon>
        <taxon>Pseudomonadota</taxon>
        <taxon>Gammaproteobacteria</taxon>
        <taxon>Enterobacterales</taxon>
        <taxon>Enterobacteriaceae</taxon>
        <taxon>Salmonella</taxon>
    </lineage>
</organism>
<proteinExistence type="inferred from homology"/>
<gene>
    <name evidence="1" type="primary">rsmG</name>
    <name type="ordered locus">SeSA_A4085</name>
</gene>
<evidence type="ECO:0000255" key="1">
    <source>
        <dbReference type="HAMAP-Rule" id="MF_00074"/>
    </source>
</evidence>
<sequence>MLNKLSRLLADAGISLTDHQKTLLVAYVDMLHKWNKAYNLTSVRDPNEMLVRHILDSIVVAPYLQGQRFIDVGTGPGLPGIPLAIVLPDAHFTLLDSLGKRVRFLRQVQHELKLENITPVQSRVEAYPSEPPFDGVISRAFASLNDMVSWCHQLPGEKGRFYALKGHLPGDEIASLPDDFSVESVEKLRVPQLEGERHLVIIKSNKV</sequence>